<reference key="1">
    <citation type="journal article" date="2003" name="Nature">
        <title>The genome of a motile marine Synechococcus.</title>
        <authorList>
            <person name="Palenik B."/>
            <person name="Brahamsha B."/>
            <person name="Larimer F.W."/>
            <person name="Land M.L."/>
            <person name="Hauser L."/>
            <person name="Chain P."/>
            <person name="Lamerdin J.E."/>
            <person name="Regala W."/>
            <person name="Allen E.E."/>
            <person name="McCarren J."/>
            <person name="Paulsen I.T."/>
            <person name="Dufresne A."/>
            <person name="Partensky F."/>
            <person name="Webb E.A."/>
            <person name="Waterbury J."/>
        </authorList>
    </citation>
    <scope>NUCLEOTIDE SEQUENCE [LARGE SCALE GENOMIC DNA]</scope>
    <source>
        <strain>WH8102</strain>
    </source>
</reference>
<name>MTND_PARMW</name>
<dbReference type="EC" id="1.13.11.54" evidence="1"/>
<dbReference type="EC" id="1.13.11.53" evidence="1"/>
<dbReference type="EMBL" id="BX569690">
    <property type="protein sequence ID" value="CAE07167.1"/>
    <property type="molecule type" value="Genomic_DNA"/>
</dbReference>
<dbReference type="RefSeq" id="WP_011127519.1">
    <property type="nucleotide sequence ID" value="NC_005070.1"/>
</dbReference>
<dbReference type="SMR" id="Q7U8G6"/>
<dbReference type="STRING" id="84588.SYNW0652"/>
<dbReference type="KEGG" id="syw:SYNW0652"/>
<dbReference type="eggNOG" id="COG1791">
    <property type="taxonomic scope" value="Bacteria"/>
</dbReference>
<dbReference type="HOGENOM" id="CLU_125400_0_0_3"/>
<dbReference type="UniPathway" id="UPA00904">
    <property type="reaction ID" value="UER00878"/>
</dbReference>
<dbReference type="Proteomes" id="UP000001422">
    <property type="component" value="Chromosome"/>
</dbReference>
<dbReference type="GO" id="GO:0010308">
    <property type="term" value="F:acireductone dioxygenase (Ni2+-requiring) activity"/>
    <property type="evidence" value="ECO:0007669"/>
    <property type="project" value="UniProtKB-UniRule"/>
</dbReference>
<dbReference type="GO" id="GO:0010309">
    <property type="term" value="F:acireductone dioxygenase [iron(II)-requiring] activity"/>
    <property type="evidence" value="ECO:0007669"/>
    <property type="project" value="UniProtKB-UniRule"/>
</dbReference>
<dbReference type="GO" id="GO:0005506">
    <property type="term" value="F:iron ion binding"/>
    <property type="evidence" value="ECO:0007669"/>
    <property type="project" value="UniProtKB-UniRule"/>
</dbReference>
<dbReference type="GO" id="GO:0016151">
    <property type="term" value="F:nickel cation binding"/>
    <property type="evidence" value="ECO:0007669"/>
    <property type="project" value="UniProtKB-UniRule"/>
</dbReference>
<dbReference type="GO" id="GO:0019509">
    <property type="term" value="P:L-methionine salvage from methylthioadenosine"/>
    <property type="evidence" value="ECO:0007669"/>
    <property type="project" value="UniProtKB-UniRule"/>
</dbReference>
<dbReference type="GO" id="GO:0019284">
    <property type="term" value="P:L-methionine salvage from S-adenosylmethionine"/>
    <property type="evidence" value="ECO:0007669"/>
    <property type="project" value="InterPro"/>
</dbReference>
<dbReference type="CDD" id="cd02232">
    <property type="entry name" value="cupin_ARD"/>
    <property type="match status" value="1"/>
</dbReference>
<dbReference type="Gene3D" id="2.60.120.10">
    <property type="entry name" value="Jelly Rolls"/>
    <property type="match status" value="1"/>
</dbReference>
<dbReference type="HAMAP" id="MF_01682">
    <property type="entry name" value="Salvage_MtnD"/>
    <property type="match status" value="1"/>
</dbReference>
<dbReference type="InterPro" id="IPR004313">
    <property type="entry name" value="ARD"/>
</dbReference>
<dbReference type="InterPro" id="IPR023956">
    <property type="entry name" value="ARD_bac"/>
</dbReference>
<dbReference type="InterPro" id="IPR014710">
    <property type="entry name" value="RmlC-like_jellyroll"/>
</dbReference>
<dbReference type="InterPro" id="IPR011051">
    <property type="entry name" value="RmlC_Cupin_sf"/>
</dbReference>
<dbReference type="PANTHER" id="PTHR23418">
    <property type="entry name" value="ACIREDUCTONE DIOXYGENASE"/>
    <property type="match status" value="1"/>
</dbReference>
<dbReference type="PANTHER" id="PTHR23418:SF0">
    <property type="entry name" value="ACIREDUCTONE DIOXYGENASE"/>
    <property type="match status" value="1"/>
</dbReference>
<dbReference type="Pfam" id="PF03079">
    <property type="entry name" value="ARD"/>
    <property type="match status" value="1"/>
</dbReference>
<dbReference type="SUPFAM" id="SSF51182">
    <property type="entry name" value="RmlC-like cupins"/>
    <property type="match status" value="1"/>
</dbReference>
<organism>
    <name type="scientific">Parasynechococcus marenigrum (strain WH8102)</name>
    <dbReference type="NCBI Taxonomy" id="84588"/>
    <lineage>
        <taxon>Bacteria</taxon>
        <taxon>Bacillati</taxon>
        <taxon>Cyanobacteriota</taxon>
        <taxon>Cyanophyceae</taxon>
        <taxon>Synechococcales</taxon>
        <taxon>Prochlorococcaceae</taxon>
        <taxon>Parasynechococcus</taxon>
        <taxon>Parasynechococcus marenigrum</taxon>
    </lineage>
</organism>
<gene>
    <name evidence="1" type="primary">mtnD</name>
    <name type="ordered locus">SYNW0652</name>
</gene>
<keyword id="KW-0028">Amino-acid biosynthesis</keyword>
<keyword id="KW-0223">Dioxygenase</keyword>
<keyword id="KW-0408">Iron</keyword>
<keyword id="KW-0479">Metal-binding</keyword>
<keyword id="KW-0486">Methionine biosynthesis</keyword>
<keyword id="KW-0533">Nickel</keyword>
<keyword id="KW-0560">Oxidoreductase</keyword>
<comment type="function">
    <text evidence="1">Catalyzes 2 different reactions between oxygen and the acireductone 1,2-dihydroxy-3-keto-5-methylthiopentene (DHK-MTPene) depending upon the metal bound in the active site. Fe-containing acireductone dioxygenase (Fe-ARD) produces formate and 2-keto-4-methylthiobutyrate (KMTB), the alpha-ketoacid precursor of methionine in the methionine recycle pathway. Ni-containing acireductone dioxygenase (Ni-ARD) produces methylthiopropionate, carbon monoxide and formate, and does not lie on the methionine recycle pathway.</text>
</comment>
<comment type="catalytic activity">
    <reaction evidence="1">
        <text>1,2-dihydroxy-5-(methylsulfanyl)pent-1-en-3-one + O2 = 3-(methylsulfanyl)propanoate + CO + formate + 2 H(+)</text>
        <dbReference type="Rhea" id="RHEA:14161"/>
        <dbReference type="ChEBI" id="CHEBI:15378"/>
        <dbReference type="ChEBI" id="CHEBI:15379"/>
        <dbReference type="ChEBI" id="CHEBI:15740"/>
        <dbReference type="ChEBI" id="CHEBI:17245"/>
        <dbReference type="ChEBI" id="CHEBI:49016"/>
        <dbReference type="ChEBI" id="CHEBI:49252"/>
        <dbReference type="EC" id="1.13.11.53"/>
    </reaction>
</comment>
<comment type="catalytic activity">
    <reaction evidence="1">
        <text>1,2-dihydroxy-5-(methylsulfanyl)pent-1-en-3-one + O2 = 4-methylsulfanyl-2-oxobutanoate + formate + 2 H(+)</text>
        <dbReference type="Rhea" id="RHEA:24504"/>
        <dbReference type="ChEBI" id="CHEBI:15378"/>
        <dbReference type="ChEBI" id="CHEBI:15379"/>
        <dbReference type="ChEBI" id="CHEBI:15740"/>
        <dbReference type="ChEBI" id="CHEBI:16723"/>
        <dbReference type="ChEBI" id="CHEBI:49252"/>
        <dbReference type="EC" id="1.13.11.54"/>
    </reaction>
</comment>
<comment type="cofactor">
    <cofactor evidence="1">
        <name>Fe(2+)</name>
        <dbReference type="ChEBI" id="CHEBI:29033"/>
    </cofactor>
    <text evidence="1">Binds 1 Fe(2+) cation per monomer.</text>
</comment>
<comment type="cofactor">
    <cofactor evidence="1">
        <name>Ni(2+)</name>
        <dbReference type="ChEBI" id="CHEBI:49786"/>
    </cofactor>
    <text evidence="1">Binds 1 nickel ion per monomer.</text>
</comment>
<comment type="pathway">
    <text evidence="1">Amino-acid biosynthesis; L-methionine biosynthesis via salvage pathway; L-methionine from S-methyl-5-thio-alpha-D-ribose 1-phosphate: step 5/6.</text>
</comment>
<comment type="subunit">
    <text evidence="1">Monomer.</text>
</comment>
<comment type="similarity">
    <text evidence="1">Belongs to the acireductone dioxygenase (ARD) family.</text>
</comment>
<protein>
    <recommendedName>
        <fullName evidence="1">Acireductone dioxygenase</fullName>
    </recommendedName>
    <alternativeName>
        <fullName evidence="1">1,2-dihydroxy-3-keto-5-methylthiopentene dioxygenase</fullName>
        <shortName evidence="1">DHK-MTPene dioxygenase</shortName>
    </alternativeName>
    <alternativeName>
        <fullName evidence="1">Acireductone dioxygenase (Fe(2+)-requiring)</fullName>
        <shortName evidence="1">ARD'</shortName>
        <shortName evidence="1">Fe-ARD</shortName>
        <ecNumber evidence="1">1.13.11.54</ecNumber>
    </alternativeName>
    <alternativeName>
        <fullName evidence="1">Acireductone dioxygenase (Ni(2+)-requiring)</fullName>
        <shortName evidence="1">ARD</shortName>
        <shortName evidence="1">Ni-ARD</shortName>
        <ecNumber evidence="1">1.13.11.53</ecNumber>
    </alternativeName>
</protein>
<feature type="chain" id="PRO_0000359244" description="Acireductone dioxygenase">
    <location>
        <begin position="1"/>
        <end position="186"/>
    </location>
</feature>
<feature type="binding site" evidence="1">
    <location>
        <position position="103"/>
    </location>
    <ligand>
        <name>Fe(2+)</name>
        <dbReference type="ChEBI" id="CHEBI:29033"/>
    </ligand>
</feature>
<feature type="binding site" evidence="1">
    <location>
        <position position="103"/>
    </location>
    <ligand>
        <name>Ni(2+)</name>
        <dbReference type="ChEBI" id="CHEBI:49786"/>
    </ligand>
</feature>
<feature type="binding site" evidence="1">
    <location>
        <position position="105"/>
    </location>
    <ligand>
        <name>Fe(2+)</name>
        <dbReference type="ChEBI" id="CHEBI:29033"/>
    </ligand>
</feature>
<feature type="binding site" evidence="1">
    <location>
        <position position="105"/>
    </location>
    <ligand>
        <name>Ni(2+)</name>
        <dbReference type="ChEBI" id="CHEBI:49786"/>
    </ligand>
</feature>
<feature type="binding site" evidence="1">
    <location>
        <position position="109"/>
    </location>
    <ligand>
        <name>Fe(2+)</name>
        <dbReference type="ChEBI" id="CHEBI:29033"/>
    </ligand>
</feature>
<feature type="binding site" evidence="1">
    <location>
        <position position="109"/>
    </location>
    <ligand>
        <name>Ni(2+)</name>
        <dbReference type="ChEBI" id="CHEBI:49786"/>
    </ligand>
</feature>
<feature type="binding site" evidence="1">
    <location>
        <position position="147"/>
    </location>
    <ligand>
        <name>Fe(2+)</name>
        <dbReference type="ChEBI" id="CHEBI:29033"/>
    </ligand>
</feature>
<feature type="binding site" evidence="1">
    <location>
        <position position="147"/>
    </location>
    <ligand>
        <name>Ni(2+)</name>
        <dbReference type="ChEBI" id="CHEBI:49786"/>
    </ligand>
</feature>
<feature type="site" description="May play a role in metal incorporation in vivo" evidence="1">
    <location>
        <position position="102"/>
    </location>
</feature>
<feature type="site" description="May play a role in transmitting local conformational changes" evidence="1">
    <location>
        <position position="108"/>
    </location>
</feature>
<feature type="site" description="Important to generate the dianion" evidence="1">
    <location>
        <position position="111"/>
    </location>
</feature>
<evidence type="ECO:0000255" key="1">
    <source>
        <dbReference type="HAMAP-Rule" id="MF_01682"/>
    </source>
</evidence>
<proteinExistence type="inferred from homology"/>
<accession>Q7U8G6</accession>
<sequence length="186" mass="20628">MSRLSIFPDHGDGGDGALPLPKLVCNDPASIQAELADRCVGFEQWPAAHALPPDADQSTILTTYASEVARVQRDGGYQTVDAIRMTPDHPEREALRNKFLSEHTHAEDEVRFFVEGQGLFSLHIDKEVLVTLCERGDLISVPAGTRHWFDMGPTPSFCALRFFNNSEGWVATFTGDSIAERFPRLD</sequence>